<feature type="initiator methionine" description="Removed; by host" evidence="3">
    <location>
        <position position="1"/>
    </location>
</feature>
<feature type="chain" id="PRO_0000038123" description="Large envelope protein" evidence="3">
    <location>
        <begin position="2"/>
        <end position="431"/>
    </location>
</feature>
<feature type="topological domain" description="Intravirion; in internal conformation" evidence="3">
    <location>
        <begin position="2"/>
        <end position="286"/>
    </location>
</feature>
<feature type="topological domain" description="Virion surface; in external conformation" evidence="3">
    <location>
        <begin position="2"/>
        <end position="214"/>
    </location>
</feature>
<feature type="transmembrane region" description="Helical; Name=TM1; Note=In external conformation" evidence="3">
    <location>
        <begin position="215"/>
        <end position="235"/>
    </location>
</feature>
<feature type="topological domain" description="Intravirion; in external conformation" evidence="3">
    <location>
        <begin position="236"/>
        <end position="286"/>
    </location>
</feature>
<feature type="transmembrane region" description="Helical; Name=TM2" evidence="3">
    <location>
        <begin position="287"/>
        <end position="307"/>
    </location>
</feature>
<feature type="topological domain" description="Virion surface" evidence="3">
    <location>
        <begin position="308"/>
        <end position="379"/>
    </location>
</feature>
<feature type="transmembrane region" description="Helical" evidence="3">
    <location>
        <begin position="380"/>
        <end position="400"/>
    </location>
</feature>
<feature type="topological domain" description="Intravirion" evidence="3">
    <location>
        <begin position="401"/>
        <end position="406"/>
    </location>
</feature>
<feature type="transmembrane region" description="Helical; Name=TM3" evidence="3">
    <location>
        <begin position="407"/>
        <end position="429"/>
    </location>
</feature>
<feature type="topological domain" description="Virion surface" evidence="3">
    <location>
        <begin position="430"/>
        <end position="431"/>
    </location>
</feature>
<feature type="region of interest" description="Pre-S" evidence="3">
    <location>
        <begin position="2"/>
        <end position="207"/>
    </location>
</feature>
<feature type="region of interest" description="Pre-S1" evidence="3">
    <location>
        <begin position="2"/>
        <end position="148"/>
    </location>
</feature>
<feature type="region of interest" description="Disordered" evidence="4">
    <location>
        <begin position="115"/>
        <end position="146"/>
    </location>
</feature>
<feature type="region of interest" description="Pre-S2" evidence="3">
    <location>
        <begin position="149"/>
        <end position="207"/>
    </location>
</feature>
<feature type="lipid moiety-binding region" description="N-myristoyl glycine; by host" evidence="3">
    <location>
        <position position="2"/>
    </location>
</feature>
<feature type="glycosylation site" description="N-linked (GlcNAc...) asparagine; by host" evidence="3">
    <location>
        <position position="351"/>
    </location>
</feature>
<feature type="splice variant" id="VSP_031460" description="In isoform S." evidence="5">
    <location>
        <begin position="1"/>
        <end position="209"/>
    </location>
</feature>
<feature type="splice variant" id="VSP_031461" description="In isoform M." evidence="5">
    <location>
        <begin position="1"/>
        <end position="149"/>
    </location>
</feature>
<feature type="glycosylation site" description="N-linked (GlcNAc...) asparagine" evidence="1">
    <location sequence="P12910-2">
        <position position="3"/>
    </location>
</feature>
<name>HBSAG_WHV3</name>
<comment type="function">
    <text evidence="3">The large envelope protein exists in two topological conformations, one which is termed 'external' or Le-HBsAg and the other 'internal' or Li-HBsAg. In its external conformation the protein attaches the virus to cell receptors and thereby initiating infection. This interaction determines the species specificity and liver tropism. This attachment induces virion internalization predominantly through caveolin-mediated endocytosis. The large envelope protein also assures fusion between virion membrane and endosomal membrane. In its internal conformation the protein plays a role in virion morphogenesis and mediates the contact with the nucleocapsid like a matrix protein.</text>
</comment>
<comment type="function">
    <text evidence="3">The middle envelope protein plays an important role in the budding of the virion. It is involved in the induction of budding in a nucleocapsid independent way. In this process the majority of envelope proteins bud to form subviral lipoprotein particles of 22 nm of diameter that do not contain a nucleocapsid.</text>
</comment>
<comment type="subunit">
    <molecule>Isoform L</molecule>
    <text evidence="2">In its internal form (Li-HBsAg), interacts with the capsid protein and with the isoform S. Interacts with host chaperone CANX.</text>
</comment>
<comment type="subunit">
    <molecule>Isoform M</molecule>
    <text evidence="2">Associates with host chaperone CANX through its pre-S2 N glycan; this association may be essential for isoform M proper secretion.</text>
</comment>
<comment type="subunit">
    <molecule>Isoform S</molecule>
    <text evidence="2">Interacts with isoform L. Interacts with the antigens of satellite virus HDV (HDVAgs); this interaction is required for encapsidation of HDV genomic RNA.</text>
</comment>
<comment type="subcellular location">
    <subcellularLocation>
        <location evidence="3">Virion membrane</location>
    </subcellularLocation>
</comment>
<comment type="alternative products">
    <event type="alternative splicing"/>
    <event type="alternative initiation"/>
    <isoform>
        <id>P12910-1</id>
        <name>L</name>
        <name>Large envelope protein</name>
        <name>LHB</name>
        <name>L-HBsAg</name>
        <sequence type="displayed"/>
    </isoform>
    <isoform>
        <id>P12910-2</id>
        <name>M</name>
        <name>Middle envelope protein</name>
        <name>MHB</name>
        <name>M-HBsAg</name>
        <sequence type="described" ref="VSP_031461"/>
    </isoform>
    <isoform>
        <id>P12910-3</id>
        <name>S</name>
        <name>Small envelope protein</name>
        <name>SHB</name>
        <name>S-HBsAg</name>
        <sequence type="described" ref="VSP_031460"/>
    </isoform>
</comment>
<comment type="domain">
    <text evidence="3">The large envelope protein is synthesized with the pre-S region at the cytosolic side of the endoplasmic reticulum and, hence will be within the virion after budding. Therefore the pre-S region is not N-glycosylated. Later a post-translational translocation of N-terminal pre-S and TM1 domains occur in about 50% of proteins at the virion surface. These molecules change their topology by an unknown mechanism, resulting in exposure of pre-S region at virion surface. For isoform M in contrast, the pre-S2 region is translocated cotranslationally to the endoplasmic reticulum lumen and is N-glycosylated.</text>
</comment>
<comment type="PTM">
    <text evidence="3">Isoform M is N-terminally acetylated by host at a ratio of 90%, and N-glycosylated by host at the pre-S2 region.</text>
</comment>
<comment type="PTM">
    <text evidence="3">Myristoylated.</text>
</comment>
<comment type="similarity">
    <text evidence="3">Belongs to the orthohepadnavirus major surface antigen family.</text>
</comment>
<dbReference type="EMBL" id="M19183">
    <property type="protein sequence ID" value="AAA46762.1"/>
    <property type="molecule type" value="Genomic_DNA"/>
</dbReference>
<dbReference type="PIR" id="H29969">
    <property type="entry name" value="SAVL59"/>
</dbReference>
<dbReference type="SMR" id="P12910"/>
<dbReference type="GlyCosmos" id="P12910">
    <property type="glycosylation" value="2 sites, No reported glycans"/>
</dbReference>
<dbReference type="Proteomes" id="UP000007542">
    <property type="component" value="Genome"/>
</dbReference>
<dbReference type="GO" id="GO:0016020">
    <property type="term" value="C:membrane"/>
    <property type="evidence" value="ECO:0007669"/>
    <property type="project" value="UniProtKB-UniRule"/>
</dbReference>
<dbReference type="GO" id="GO:0019031">
    <property type="term" value="C:viral envelope"/>
    <property type="evidence" value="ECO:0007669"/>
    <property type="project" value="UniProtKB-KW"/>
</dbReference>
<dbReference type="GO" id="GO:0055036">
    <property type="term" value="C:virion membrane"/>
    <property type="evidence" value="ECO:0007669"/>
    <property type="project" value="UniProtKB-SubCell"/>
</dbReference>
<dbReference type="GO" id="GO:0075513">
    <property type="term" value="P:caveolin-mediated endocytosis of virus by host cell"/>
    <property type="evidence" value="ECO:0007669"/>
    <property type="project" value="UniProtKB-KW"/>
</dbReference>
<dbReference type="GO" id="GO:0039654">
    <property type="term" value="P:fusion of virus membrane with host endosome membrane"/>
    <property type="evidence" value="ECO:0007669"/>
    <property type="project" value="UniProtKB-KW"/>
</dbReference>
<dbReference type="GO" id="GO:0019062">
    <property type="term" value="P:virion attachment to host cell"/>
    <property type="evidence" value="ECO:0007669"/>
    <property type="project" value="UniProtKB-UniRule"/>
</dbReference>
<dbReference type="HAMAP" id="MF_04075">
    <property type="entry name" value="HBV_HBSAG"/>
    <property type="match status" value="1"/>
</dbReference>
<dbReference type="InterPro" id="IPR000349">
    <property type="entry name" value="HBV_HBSAG"/>
</dbReference>
<dbReference type="Pfam" id="PF00695">
    <property type="entry name" value="vMSA"/>
    <property type="match status" value="1"/>
</dbReference>
<organism>
    <name type="scientific">Woodchuck hepatitis B virus (isolate 59)</name>
    <name type="common">WHV</name>
    <dbReference type="NCBI Taxonomy" id="10431"/>
    <lineage>
        <taxon>Viruses</taxon>
        <taxon>Riboviria</taxon>
        <taxon>Pararnavirae</taxon>
        <taxon>Artverviricota</taxon>
        <taxon>Revtraviricetes</taxon>
        <taxon>Blubervirales</taxon>
        <taxon>Hepadnaviridae</taxon>
        <taxon>Orthohepadnavirus</taxon>
        <taxon>Woodchuck hepatitis virus</taxon>
    </lineage>
</organism>
<evidence type="ECO:0000250" key="1">
    <source>
        <dbReference type="UniProtKB" id="P03138"/>
    </source>
</evidence>
<evidence type="ECO:0000250" key="2">
    <source>
        <dbReference type="UniProtKB" id="P03141"/>
    </source>
</evidence>
<evidence type="ECO:0000255" key="3">
    <source>
        <dbReference type="HAMAP-Rule" id="MF_04075"/>
    </source>
</evidence>
<evidence type="ECO:0000256" key="4">
    <source>
        <dbReference type="SAM" id="MobiDB-lite"/>
    </source>
</evidence>
<evidence type="ECO:0000305" key="5"/>
<protein>
    <recommendedName>
        <fullName evidence="3">Large envelope protein</fullName>
    </recommendedName>
    <alternativeName>
        <fullName evidence="3">L glycoprotein</fullName>
    </alternativeName>
    <alternativeName>
        <fullName evidence="3">L-HBsAg</fullName>
        <shortName evidence="3">LHB</shortName>
    </alternativeName>
    <alternativeName>
        <fullName evidence="3">Large S protein</fullName>
    </alternativeName>
    <alternativeName>
        <fullName evidence="3">Large surface protein</fullName>
    </alternativeName>
    <alternativeName>
        <fullName evidence="3">Major surface antigen</fullName>
    </alternativeName>
</protein>
<reference key="1">
    <citation type="journal article" date="1988" name="Virology">
        <title>Sequence comparison of woodchuck hepatitis virus replicative forms shows conservation of the genome.</title>
        <authorList>
            <person name="Cohen J.I."/>
            <person name="Miller R.H."/>
            <person name="Rosenblum B."/>
            <person name="Denniston K."/>
            <person name="Gerin J.L."/>
            <person name="Purcell R.H."/>
        </authorList>
    </citation>
    <scope>NUCLEOTIDE SEQUENCE [GENOMIC DNA]</scope>
</reference>
<reference key="2">
    <citation type="journal article" date="1996" name="Intervirology">
        <title>Functions of the large hepatitis B virus surface protein in viral particle morphogenesis.</title>
        <authorList>
            <person name="Bruss V."/>
            <person name="Gerhardt E."/>
            <person name="Vieluf K."/>
            <person name="Wunderlich G."/>
        </authorList>
    </citation>
    <scope>REVIEW</scope>
</reference>
<reference key="3">
    <citation type="journal article" date="1998" name="Adv. Exp. Med. Biol.">
        <title>Role of glycan processing in hepatitis B virus envelope protein trafficking.</title>
        <authorList>
            <person name="Block T.M."/>
            <person name="Lu X."/>
            <person name="Mehta A."/>
            <person name="Park J."/>
            <person name="Blumberg B.S."/>
            <person name="Dwek R."/>
        </authorList>
    </citation>
    <scope>REVIEW</scope>
</reference>
<reference key="4">
    <citation type="journal article" date="2004" name="Virus Res.">
        <title>Envelopment of the hepatitis B virus nucleocapsid.</title>
        <authorList>
            <person name="Bruss V."/>
        </authorList>
    </citation>
    <scope>REVIEW</scope>
</reference>
<reference key="5">
    <citation type="journal article" date="2006" name="Cancer Sci.">
        <title>Hepatitis B virus pre-S mutants, endoplasmic reticulum stress and hepatocarcinogenesis.</title>
        <authorList>
            <person name="Wang H.C."/>
            <person name="Huang W."/>
            <person name="Lai M.D."/>
            <person name="Su I.J."/>
        </authorList>
    </citation>
    <scope>REVIEW</scope>
</reference>
<keyword id="KW-0007">Acetylation</keyword>
<keyword id="KW-0024">Alternative initiation</keyword>
<keyword id="KW-0025">Alternative splicing</keyword>
<keyword id="KW-1166">Caveolin-mediated endocytosis of virus by host</keyword>
<keyword id="KW-1170">Fusion of virus membrane with host endosomal membrane</keyword>
<keyword id="KW-1168">Fusion of virus membrane with host membrane</keyword>
<keyword id="KW-0325">Glycoprotein</keyword>
<keyword id="KW-0945">Host-virus interaction</keyword>
<keyword id="KW-0449">Lipoprotein</keyword>
<keyword id="KW-0472">Membrane</keyword>
<keyword id="KW-0519">Myristate</keyword>
<keyword id="KW-0812">Transmembrane</keyword>
<keyword id="KW-1133">Transmembrane helix</keyword>
<keyword id="KW-1161">Viral attachment to host cell</keyword>
<keyword id="KW-0261">Viral envelope protein</keyword>
<keyword id="KW-1162">Viral penetration into host cytoplasm</keyword>
<keyword id="KW-0946">Virion</keyword>
<keyword id="KW-1164">Virus endocytosis by host</keyword>
<keyword id="KW-1160">Virus entry into host cell</keyword>
<accession>P12910</accession>
<sequence length="431" mass="49018">MGNNIKVTFNPDKIAAWWPAVGTYYTTTYPQNQSVFQPGIYQTTSLINPKNQQELDSVLINRYKQIDWNTWQGFPVDQKLPLVSRDPPLKPHINQSAQTFEIKPGPIIVPGIRDIPRGLVPPQTPTNRDQGRKPTPPTPPLRDTHPHLTMKNQTFRLQGFVDGLRDLTTTERYHNAYGDPFTTLSPVVPTVSTILSPPSTTGDPALSPEMSPSSLLGLLAGLQVVYFLWTKILTIAQNLDWWWTSLSFPGGIPECTGQNSQFQTCKHLPTSCPPTCNGFRWMYLRRFIIYLLVLLLCLIFLLVLLDWKGLIPVCPLQPTTETTVNCRQCTLSVQDTYTPPYCCCLKPTAGNCTCWPIPSSWALGNYLWEWALARFSWLNLLVPLLQWLGGISLIAWFLLIWMIWFWGPALLSILPPFIPIFVLFFLIWVYI</sequence>
<gene>
    <name evidence="3" type="primary">S</name>
</gene>
<proteinExistence type="inferred from homology"/>
<organismHost>
    <name type="scientific">Marmota monax</name>
    <name type="common">Woodchuck</name>
    <dbReference type="NCBI Taxonomy" id="9995"/>
</organismHost>